<reference key="1">
    <citation type="submission" date="2005-09" db="EMBL/GenBank/DDBJ databases">
        <authorList>
            <consortium name="NIH - Mammalian Gene Collection (MGC) project"/>
        </authorList>
    </citation>
    <scope>NUCLEOTIDE SEQUENCE [LARGE SCALE MRNA]</scope>
    <source>
        <strain>Crossbred X Angus</strain>
        <tissue>Ileum</tissue>
    </source>
</reference>
<dbReference type="EC" id="3.1.3.16" evidence="1"/>
<dbReference type="EMBL" id="BC105394">
    <property type="protein sequence ID" value="AAI05395.1"/>
    <property type="molecule type" value="mRNA"/>
</dbReference>
<dbReference type="RefSeq" id="NP_001039459.1">
    <property type="nucleotide sequence ID" value="NM_001045994.1"/>
</dbReference>
<dbReference type="RefSeq" id="XP_010805865.1">
    <property type="nucleotide sequence ID" value="XM_010807563.2"/>
</dbReference>
<dbReference type="BMRB" id="Q2KJD7"/>
<dbReference type="SMR" id="Q2KJD7"/>
<dbReference type="FunCoup" id="Q2KJD7">
    <property type="interactions" value="4046"/>
</dbReference>
<dbReference type="STRING" id="9913.ENSBTAP00000011999"/>
<dbReference type="PaxDb" id="9913-ENSBTAP00000011999"/>
<dbReference type="Ensembl" id="ENSBTAT00000011999.4">
    <property type="protein sequence ID" value="ENSBTAP00000011999.3"/>
    <property type="gene ID" value="ENSBTAG00000009103.4"/>
</dbReference>
<dbReference type="GeneID" id="508163"/>
<dbReference type="KEGG" id="bta:508163"/>
<dbReference type="CTD" id="134510"/>
<dbReference type="VEuPathDB" id="HostDB:ENSBTAG00000009103"/>
<dbReference type="VGNC" id="VGNC:36609">
    <property type="gene designation" value="UBLCP1"/>
</dbReference>
<dbReference type="eggNOG" id="KOG1605">
    <property type="taxonomic scope" value="Eukaryota"/>
</dbReference>
<dbReference type="eggNOG" id="KOG1872">
    <property type="taxonomic scope" value="Eukaryota"/>
</dbReference>
<dbReference type="GeneTree" id="ENSGT00390000010107"/>
<dbReference type="HOGENOM" id="CLU_046931_1_0_1"/>
<dbReference type="InParanoid" id="Q2KJD7"/>
<dbReference type="OMA" id="TVHTPKY"/>
<dbReference type="OrthoDB" id="1711508at2759"/>
<dbReference type="TreeFam" id="TF323786"/>
<dbReference type="Proteomes" id="UP000009136">
    <property type="component" value="Chromosome 7"/>
</dbReference>
<dbReference type="Bgee" id="ENSBTAG00000009103">
    <property type="expression patterns" value="Expressed in oocyte and 107 other cell types or tissues"/>
</dbReference>
<dbReference type="GO" id="GO:0005730">
    <property type="term" value="C:nucleolus"/>
    <property type="evidence" value="ECO:0007669"/>
    <property type="project" value="Ensembl"/>
</dbReference>
<dbReference type="GO" id="GO:0005654">
    <property type="term" value="C:nucleoplasm"/>
    <property type="evidence" value="ECO:0007669"/>
    <property type="project" value="Ensembl"/>
</dbReference>
<dbReference type="GO" id="GO:0005634">
    <property type="term" value="C:nucleus"/>
    <property type="evidence" value="ECO:0000318"/>
    <property type="project" value="GO_Central"/>
</dbReference>
<dbReference type="GO" id="GO:0046872">
    <property type="term" value="F:metal ion binding"/>
    <property type="evidence" value="ECO:0007669"/>
    <property type="project" value="UniProtKB-KW"/>
</dbReference>
<dbReference type="GO" id="GO:1904855">
    <property type="term" value="F:proteasome regulatory particle binding"/>
    <property type="evidence" value="ECO:0007669"/>
    <property type="project" value="Ensembl"/>
</dbReference>
<dbReference type="GO" id="GO:0004722">
    <property type="term" value="F:protein serine/threonine phosphatase activity"/>
    <property type="evidence" value="ECO:0000318"/>
    <property type="project" value="GO_Central"/>
</dbReference>
<dbReference type="GO" id="GO:0090364">
    <property type="term" value="P:regulation of proteasome assembly"/>
    <property type="evidence" value="ECO:0000318"/>
    <property type="project" value="GO_Central"/>
</dbReference>
<dbReference type="CDD" id="cd01813">
    <property type="entry name" value="Ubl_UBLCP1"/>
    <property type="match status" value="1"/>
</dbReference>
<dbReference type="FunFam" id="3.40.50.1000:FF:000050">
    <property type="entry name" value="Ubiquitin-like domain-containing CTD phosphatase 1"/>
    <property type="match status" value="1"/>
</dbReference>
<dbReference type="FunFam" id="3.10.20.90:FF:000060">
    <property type="entry name" value="ubiquitin-like domain-containing CTD phosphatase 1"/>
    <property type="match status" value="1"/>
</dbReference>
<dbReference type="Gene3D" id="3.40.50.1000">
    <property type="entry name" value="HAD superfamily/HAD-like"/>
    <property type="match status" value="1"/>
</dbReference>
<dbReference type="Gene3D" id="3.10.20.90">
    <property type="entry name" value="Phosphatidylinositol 3-kinase Catalytic Subunit, Chain A, domain 1"/>
    <property type="match status" value="1"/>
</dbReference>
<dbReference type="InterPro" id="IPR004274">
    <property type="entry name" value="FCP1_dom"/>
</dbReference>
<dbReference type="InterPro" id="IPR036412">
    <property type="entry name" value="HAD-like_sf"/>
</dbReference>
<dbReference type="InterPro" id="IPR011943">
    <property type="entry name" value="HAD-SF_hydro_IIID"/>
</dbReference>
<dbReference type="InterPro" id="IPR023214">
    <property type="entry name" value="HAD_sf"/>
</dbReference>
<dbReference type="InterPro" id="IPR000626">
    <property type="entry name" value="Ubiquitin-like_dom"/>
</dbReference>
<dbReference type="InterPro" id="IPR029071">
    <property type="entry name" value="Ubiquitin-like_domsf"/>
</dbReference>
<dbReference type="InterPro" id="IPR051658">
    <property type="entry name" value="UBLCP1"/>
</dbReference>
<dbReference type="NCBIfam" id="TIGR02245">
    <property type="entry name" value="HAD_IIID1"/>
    <property type="match status" value="1"/>
</dbReference>
<dbReference type="PANTHER" id="PTHR48493">
    <property type="entry name" value="UBIQUITIN-LIKE DOMAIN-CONTAINING CTD PHOSPHATASE 1"/>
    <property type="match status" value="1"/>
</dbReference>
<dbReference type="PANTHER" id="PTHR48493:SF1">
    <property type="entry name" value="UBIQUITIN-LIKE DOMAIN-CONTAINING CTD PHOSPHATASE 1"/>
    <property type="match status" value="1"/>
</dbReference>
<dbReference type="Pfam" id="PF03031">
    <property type="entry name" value="NIF"/>
    <property type="match status" value="1"/>
</dbReference>
<dbReference type="Pfam" id="PF00240">
    <property type="entry name" value="ubiquitin"/>
    <property type="match status" value="1"/>
</dbReference>
<dbReference type="SMART" id="SM00577">
    <property type="entry name" value="CPDc"/>
    <property type="match status" value="1"/>
</dbReference>
<dbReference type="SMART" id="SM00213">
    <property type="entry name" value="UBQ"/>
    <property type="match status" value="1"/>
</dbReference>
<dbReference type="SUPFAM" id="SSF56784">
    <property type="entry name" value="HAD-like"/>
    <property type="match status" value="1"/>
</dbReference>
<dbReference type="SUPFAM" id="SSF54236">
    <property type="entry name" value="Ubiquitin-like"/>
    <property type="match status" value="1"/>
</dbReference>
<dbReference type="PROSITE" id="PS50969">
    <property type="entry name" value="FCP1"/>
    <property type="match status" value="1"/>
</dbReference>
<dbReference type="PROSITE" id="PS50053">
    <property type="entry name" value="UBIQUITIN_2"/>
    <property type="match status" value="1"/>
</dbReference>
<gene>
    <name type="primary">UBLCP1</name>
</gene>
<name>UBCP1_BOVIN</name>
<accession>Q2KJD7</accession>
<organism>
    <name type="scientific">Bos taurus</name>
    <name type="common">Bovine</name>
    <dbReference type="NCBI Taxonomy" id="9913"/>
    <lineage>
        <taxon>Eukaryota</taxon>
        <taxon>Metazoa</taxon>
        <taxon>Chordata</taxon>
        <taxon>Craniata</taxon>
        <taxon>Vertebrata</taxon>
        <taxon>Euteleostomi</taxon>
        <taxon>Mammalia</taxon>
        <taxon>Eutheria</taxon>
        <taxon>Laurasiatheria</taxon>
        <taxon>Artiodactyla</taxon>
        <taxon>Ruminantia</taxon>
        <taxon>Pecora</taxon>
        <taxon>Bovidae</taxon>
        <taxon>Bovinae</taxon>
        <taxon>Bos</taxon>
    </lineage>
</organism>
<proteinExistence type="evidence at transcript level"/>
<keyword id="KW-0007">Acetylation</keyword>
<keyword id="KW-0378">Hydrolase</keyword>
<keyword id="KW-0460">Magnesium</keyword>
<keyword id="KW-0479">Metal-binding</keyword>
<keyword id="KW-0539">Nucleus</keyword>
<keyword id="KW-0904">Protein phosphatase</keyword>
<keyword id="KW-1185">Reference proteome</keyword>
<protein>
    <recommendedName>
        <fullName>Ubiquitin-like domain-containing CTD phosphatase 1</fullName>
        <ecNumber evidence="1">3.1.3.16</ecNumber>
    </recommendedName>
    <alternativeName>
        <fullName>Nuclear proteasome inhibitor UBLCP1</fullName>
    </alternativeName>
</protein>
<feature type="initiator methionine" description="Removed" evidence="1">
    <location>
        <position position="1"/>
    </location>
</feature>
<feature type="chain" id="PRO_0000242639" description="Ubiquitin-like domain-containing CTD phosphatase 1">
    <location>
        <begin position="2"/>
        <end position="318"/>
    </location>
</feature>
<feature type="domain" description="Ubiquitin-like" evidence="3">
    <location>
        <begin position="3"/>
        <end position="81"/>
    </location>
</feature>
<feature type="domain" description="FCP1 homology" evidence="4">
    <location>
        <begin position="133"/>
        <end position="294"/>
    </location>
</feature>
<feature type="binding site" evidence="2">
    <location>
        <position position="143"/>
    </location>
    <ligand>
        <name>Mg(2+)</name>
        <dbReference type="ChEBI" id="CHEBI:18420"/>
    </ligand>
</feature>
<feature type="binding site" evidence="2">
    <location>
        <position position="145"/>
    </location>
    <ligand>
        <name>Mg(2+)</name>
        <dbReference type="ChEBI" id="CHEBI:18420"/>
    </ligand>
</feature>
<feature type="binding site" evidence="2">
    <location>
        <position position="253"/>
    </location>
    <ligand>
        <name>Mg(2+)</name>
        <dbReference type="ChEBI" id="CHEBI:18420"/>
    </ligand>
</feature>
<feature type="modified residue" description="N-acetylalanine" evidence="1">
    <location>
        <position position="2"/>
    </location>
</feature>
<feature type="modified residue" description="N6-acetyllysine" evidence="1">
    <location>
        <position position="117"/>
    </location>
</feature>
<evidence type="ECO:0000250" key="1">
    <source>
        <dbReference type="UniProtKB" id="Q8WVY7"/>
    </source>
</evidence>
<evidence type="ECO:0000250" key="2">
    <source>
        <dbReference type="UniProtKB" id="Q9XZ16"/>
    </source>
</evidence>
<evidence type="ECO:0000255" key="3">
    <source>
        <dbReference type="PROSITE-ProRule" id="PRU00214"/>
    </source>
</evidence>
<evidence type="ECO:0000255" key="4">
    <source>
        <dbReference type="PROSITE-ProRule" id="PRU00336"/>
    </source>
</evidence>
<sequence length="318" mass="36805">MALPIIVKWGGQEYSVTTLSEDDTVLDLKQFLKTLTGVLPERQKLLGLKVKGKPAENDVKLGALKLKPNTKIMMMGTREESLEDVLGPPPDNDDVVNDFDIEDEVVEVENREENLLKISRRVKEYKVEILNPPREGKKLLVLDVDYTLFDHRSCAETGVELMRPYLHEFLTSAYEDYDIVIWSATNMKWIEAKMKELGVSTNANYKITFMLDSAAMITVHTPRRGLIDVKPLGVIWGKFSEFYSKKNTIMFDDIGRNFLMNPQNGLKIRPFMKAHLNRDKDKELLKLTQYLKEIAKLDDFLDLNHKYWERYLSKKQGQ</sequence>
<comment type="function">
    <text evidence="1">Dephosphorylates 26S nuclear proteasomes, thereby decreasing their proteolytic activity. Recruited to the 19S regulatory particle of the 26S proteasome through its interaction with 19S component PSMD2/RPN1. Once recruited, dephosphorylates 19S component PSMC2/RPT1 which impairs PSMC2 ATPase activity and disrupts 26S proteasome assembly. Has also been reported to stimulate the proteolytic activity of the 26S proteasome.</text>
</comment>
<comment type="catalytic activity">
    <reaction evidence="1">
        <text>O-phospho-L-seryl-[protein] + H2O = L-seryl-[protein] + phosphate</text>
        <dbReference type="Rhea" id="RHEA:20629"/>
        <dbReference type="Rhea" id="RHEA-COMP:9863"/>
        <dbReference type="Rhea" id="RHEA-COMP:11604"/>
        <dbReference type="ChEBI" id="CHEBI:15377"/>
        <dbReference type="ChEBI" id="CHEBI:29999"/>
        <dbReference type="ChEBI" id="CHEBI:43474"/>
        <dbReference type="ChEBI" id="CHEBI:83421"/>
        <dbReference type="EC" id="3.1.3.16"/>
    </reaction>
</comment>
<comment type="catalytic activity">
    <reaction evidence="1">
        <text>O-phospho-L-threonyl-[protein] + H2O = L-threonyl-[protein] + phosphate</text>
        <dbReference type="Rhea" id="RHEA:47004"/>
        <dbReference type="Rhea" id="RHEA-COMP:11060"/>
        <dbReference type="Rhea" id="RHEA-COMP:11605"/>
        <dbReference type="ChEBI" id="CHEBI:15377"/>
        <dbReference type="ChEBI" id="CHEBI:30013"/>
        <dbReference type="ChEBI" id="CHEBI:43474"/>
        <dbReference type="ChEBI" id="CHEBI:61977"/>
        <dbReference type="EC" id="3.1.3.16"/>
    </reaction>
</comment>
<comment type="cofactor">
    <cofactor evidence="1">
        <name>Mg(2+)</name>
        <dbReference type="ChEBI" id="CHEBI:18420"/>
    </cofactor>
</comment>
<comment type="subcellular location">
    <subcellularLocation>
        <location evidence="1">Nucleus</location>
    </subcellularLocation>
    <text evidence="1">Colocalizes with nuclear proteasomes.</text>
</comment>
<comment type="domain">
    <text evidence="1">The Ubiquitin-like domain mediates interaction with proteasomes.</text>
</comment>